<dbReference type="EC" id="7.-.-.-" evidence="1"/>
<dbReference type="EMBL" id="AE005674">
    <property type="protein sequence ID" value="AAN43236.1"/>
    <property type="molecule type" value="Genomic_DNA"/>
</dbReference>
<dbReference type="EMBL" id="AE014073">
    <property type="protein sequence ID" value="AAP17122.1"/>
    <property type="molecule type" value="Genomic_DNA"/>
</dbReference>
<dbReference type="RefSeq" id="NP_707529.1">
    <property type="nucleotide sequence ID" value="NC_004337.2"/>
</dbReference>
<dbReference type="RefSeq" id="WP_000915842.1">
    <property type="nucleotide sequence ID" value="NZ_WPGW01000065.1"/>
</dbReference>
<dbReference type="SMR" id="Q83RB9"/>
<dbReference type="STRING" id="198214.SF1654"/>
<dbReference type="PaxDb" id="198214-SF1654"/>
<dbReference type="GeneID" id="1024831"/>
<dbReference type="KEGG" id="sfl:SF1654"/>
<dbReference type="KEGG" id="sfx:S1786"/>
<dbReference type="PATRIC" id="fig|198214.7.peg.1950"/>
<dbReference type="HOGENOM" id="CLU_010808_2_1_6"/>
<dbReference type="Proteomes" id="UP000001006">
    <property type="component" value="Chromosome"/>
</dbReference>
<dbReference type="Proteomes" id="UP000002673">
    <property type="component" value="Chromosome"/>
</dbReference>
<dbReference type="GO" id="GO:0005886">
    <property type="term" value="C:plasma membrane"/>
    <property type="evidence" value="ECO:0007669"/>
    <property type="project" value="UniProtKB-SubCell"/>
</dbReference>
<dbReference type="GO" id="GO:0051539">
    <property type="term" value="F:4 iron, 4 sulfur cluster binding"/>
    <property type="evidence" value="ECO:0007669"/>
    <property type="project" value="UniProtKB-KW"/>
</dbReference>
<dbReference type="GO" id="GO:0009055">
    <property type="term" value="F:electron transfer activity"/>
    <property type="evidence" value="ECO:0007669"/>
    <property type="project" value="InterPro"/>
</dbReference>
<dbReference type="GO" id="GO:0046872">
    <property type="term" value="F:metal ion binding"/>
    <property type="evidence" value="ECO:0007669"/>
    <property type="project" value="UniProtKB-KW"/>
</dbReference>
<dbReference type="GO" id="GO:0022900">
    <property type="term" value="P:electron transport chain"/>
    <property type="evidence" value="ECO:0007669"/>
    <property type="project" value="UniProtKB-UniRule"/>
</dbReference>
<dbReference type="Gene3D" id="3.30.70.20">
    <property type="match status" value="1"/>
</dbReference>
<dbReference type="Gene3D" id="3.40.50.11540">
    <property type="entry name" value="NADH-ubiquinone oxidoreductase 51kDa subunit"/>
    <property type="match status" value="1"/>
</dbReference>
<dbReference type="HAMAP" id="MF_00461">
    <property type="entry name" value="RsxC_RnfC"/>
    <property type="match status" value="1"/>
</dbReference>
<dbReference type="InterPro" id="IPR017896">
    <property type="entry name" value="4Fe4S_Fe-S-bd"/>
</dbReference>
<dbReference type="InterPro" id="IPR017900">
    <property type="entry name" value="4Fe4S_Fe_S_CS"/>
</dbReference>
<dbReference type="InterPro" id="IPR010208">
    <property type="entry name" value="Ion_transpt_RnfC/RsxC"/>
</dbReference>
<dbReference type="InterPro" id="IPR011538">
    <property type="entry name" value="Nuo51_FMN-bd"/>
</dbReference>
<dbReference type="InterPro" id="IPR037225">
    <property type="entry name" value="Nuo51_FMN-bd_sf"/>
</dbReference>
<dbReference type="InterPro" id="IPR026902">
    <property type="entry name" value="RnfC_N"/>
</dbReference>
<dbReference type="InterPro" id="IPR019554">
    <property type="entry name" value="Soluble_ligand-bd"/>
</dbReference>
<dbReference type="NCBIfam" id="NF003454">
    <property type="entry name" value="PRK05035.1"/>
    <property type="match status" value="1"/>
</dbReference>
<dbReference type="NCBIfam" id="TIGR01945">
    <property type="entry name" value="rnfC"/>
    <property type="match status" value="1"/>
</dbReference>
<dbReference type="PANTHER" id="PTHR43034">
    <property type="entry name" value="ION-TRANSLOCATING OXIDOREDUCTASE COMPLEX SUBUNIT C"/>
    <property type="match status" value="1"/>
</dbReference>
<dbReference type="PANTHER" id="PTHR43034:SF2">
    <property type="entry name" value="ION-TRANSLOCATING OXIDOREDUCTASE COMPLEX SUBUNIT C"/>
    <property type="match status" value="1"/>
</dbReference>
<dbReference type="Pfam" id="PF01512">
    <property type="entry name" value="Complex1_51K"/>
    <property type="match status" value="1"/>
</dbReference>
<dbReference type="Pfam" id="PF12838">
    <property type="entry name" value="Fer4_7"/>
    <property type="match status" value="1"/>
</dbReference>
<dbReference type="Pfam" id="PF13375">
    <property type="entry name" value="RnfC_N"/>
    <property type="match status" value="1"/>
</dbReference>
<dbReference type="Pfam" id="PF10531">
    <property type="entry name" value="SLBB"/>
    <property type="match status" value="1"/>
</dbReference>
<dbReference type="SUPFAM" id="SSF46548">
    <property type="entry name" value="alpha-helical ferredoxin"/>
    <property type="match status" value="1"/>
</dbReference>
<dbReference type="SUPFAM" id="SSF142019">
    <property type="entry name" value="Nqo1 FMN-binding domain-like"/>
    <property type="match status" value="1"/>
</dbReference>
<dbReference type="PROSITE" id="PS00198">
    <property type="entry name" value="4FE4S_FER_1"/>
    <property type="match status" value="2"/>
</dbReference>
<dbReference type="PROSITE" id="PS51379">
    <property type="entry name" value="4FE4S_FER_2"/>
    <property type="match status" value="2"/>
</dbReference>
<name>RSXC_SHIFL</name>
<protein>
    <recommendedName>
        <fullName evidence="1">Ion-translocating oxidoreductase complex subunit C</fullName>
        <ecNumber evidence="1">7.-.-.-</ecNumber>
    </recommendedName>
    <alternativeName>
        <fullName evidence="1">Rsx electron transport complex subunit C</fullName>
    </alternativeName>
</protein>
<proteinExistence type="inferred from homology"/>
<organism>
    <name type="scientific">Shigella flexneri</name>
    <dbReference type="NCBI Taxonomy" id="623"/>
    <lineage>
        <taxon>Bacteria</taxon>
        <taxon>Pseudomonadati</taxon>
        <taxon>Pseudomonadota</taxon>
        <taxon>Gammaproteobacteria</taxon>
        <taxon>Enterobacterales</taxon>
        <taxon>Enterobacteriaceae</taxon>
        <taxon>Shigella</taxon>
    </lineage>
</organism>
<reference key="1">
    <citation type="journal article" date="2002" name="Nucleic Acids Res.">
        <title>Genome sequence of Shigella flexneri 2a: insights into pathogenicity through comparison with genomes of Escherichia coli K12 and O157.</title>
        <authorList>
            <person name="Jin Q."/>
            <person name="Yuan Z."/>
            <person name="Xu J."/>
            <person name="Wang Y."/>
            <person name="Shen Y."/>
            <person name="Lu W."/>
            <person name="Wang J."/>
            <person name="Liu H."/>
            <person name="Yang J."/>
            <person name="Yang F."/>
            <person name="Zhang X."/>
            <person name="Zhang J."/>
            <person name="Yang G."/>
            <person name="Wu H."/>
            <person name="Qu D."/>
            <person name="Dong J."/>
            <person name="Sun L."/>
            <person name="Xue Y."/>
            <person name="Zhao A."/>
            <person name="Gao Y."/>
            <person name="Zhu J."/>
            <person name="Kan B."/>
            <person name="Ding K."/>
            <person name="Chen S."/>
            <person name="Cheng H."/>
            <person name="Yao Z."/>
            <person name="He B."/>
            <person name="Chen R."/>
            <person name="Ma D."/>
            <person name="Qiang B."/>
            <person name="Wen Y."/>
            <person name="Hou Y."/>
            <person name="Yu J."/>
        </authorList>
    </citation>
    <scope>NUCLEOTIDE SEQUENCE [LARGE SCALE GENOMIC DNA]</scope>
    <source>
        <strain>301 / Serotype 2a</strain>
    </source>
</reference>
<reference key="2">
    <citation type="journal article" date="2003" name="Infect. Immun.">
        <title>Complete genome sequence and comparative genomics of Shigella flexneri serotype 2a strain 2457T.</title>
        <authorList>
            <person name="Wei J."/>
            <person name="Goldberg M.B."/>
            <person name="Burland V."/>
            <person name="Venkatesan M.M."/>
            <person name="Deng W."/>
            <person name="Fournier G."/>
            <person name="Mayhew G.F."/>
            <person name="Plunkett G. III"/>
            <person name="Rose D.J."/>
            <person name="Darling A."/>
            <person name="Mau B."/>
            <person name="Perna N.T."/>
            <person name="Payne S.M."/>
            <person name="Runyen-Janecky L.J."/>
            <person name="Zhou S."/>
            <person name="Schwartz D.C."/>
            <person name="Blattner F.R."/>
        </authorList>
    </citation>
    <scope>NUCLEOTIDE SEQUENCE [LARGE SCALE GENOMIC DNA]</scope>
    <source>
        <strain>ATCC 700930 / 2457T / Serotype 2a</strain>
    </source>
</reference>
<gene>
    <name evidence="1" type="primary">rsxC</name>
    <name type="ordered locus">SF1654</name>
    <name type="ordered locus">S1786</name>
</gene>
<keyword id="KW-0004">4Fe-4S</keyword>
<keyword id="KW-0997">Cell inner membrane</keyword>
<keyword id="KW-1003">Cell membrane</keyword>
<keyword id="KW-0249">Electron transport</keyword>
<keyword id="KW-0408">Iron</keyword>
<keyword id="KW-0411">Iron-sulfur</keyword>
<keyword id="KW-0472">Membrane</keyword>
<keyword id="KW-0479">Metal-binding</keyword>
<keyword id="KW-1185">Reference proteome</keyword>
<keyword id="KW-0677">Repeat</keyword>
<keyword id="KW-1278">Translocase</keyword>
<keyword id="KW-0813">Transport</keyword>
<evidence type="ECO:0000255" key="1">
    <source>
        <dbReference type="HAMAP-Rule" id="MF_00461"/>
    </source>
</evidence>
<evidence type="ECO:0000256" key="2">
    <source>
        <dbReference type="SAM" id="MobiDB-lite"/>
    </source>
</evidence>
<accession>Q83RB9</accession>
<accession>Q7C1G7</accession>
<sequence>MLKLFSAFRKNKIWDFNGGIHPPEMKTQTNGTPLRQVLLAQHFVIPLKQHIGAEGELCVSVGDKVLRGQPLTRGRGKMLPVHAPTSGTVTAIAPHSTAHPSALAELSVIIDADGEDCWIPRDGWVDYRSRSREELIERIHQFGVAGLGGAGFPTGVKLQGGGDKIETLIINAAECEPYITADDRLMQDCAAQVVEGIRILAHILQPREILIGIEDNKPQAISMLRAVLADSNDISLRVIPTKYPSGGAKQLTYILTGKQVPHGGRSSDIGVLMQNVGTAYAVKRAVIDGEPITERVVTLTGEAIARPGNVWARLGTPVRHLLNDAGFCPSADQMVIMGGPLMGFTLPWLDVPVVKITNCLLAPSANELGEPQEEQSCIRCSACADACPVDLLPQQLYWFSKGQQHDKATTHNIADCIECGACAWVCPSNIPLVQYFRQEKAEIAAIRQEEKRAAEAKARFEARQARLEREKATRLERHKSAAVQPAAKDKDAIAAALARVKEKQAQATQPIVIKAGERPDNSAIIAEREARKAQARAKQAELEQTNDAATVAEPRKTAVEAAIARSKARKLEQQQANAEPEEQVDPRKAAVEAAIARAKARKLEQQQANAEPEEQVDPRKAAVEAAIARAKARKLEQQQANAEPEEQVDPRKAAVEAAIARAKARKLEQQQANAEPEEQVDPRKAAVEAAIARAKARKLEQQQANAEPEEQVDPRKAAVAAAIARVQAKKAAQQKVVNED</sequence>
<comment type="function">
    <text evidence="1">Part of a membrane-bound complex that couples electron transfer with translocation of ions across the membrane. Required to maintain the reduced state of SoxR.</text>
</comment>
<comment type="cofactor">
    <cofactor evidence="1">
        <name>[4Fe-4S] cluster</name>
        <dbReference type="ChEBI" id="CHEBI:49883"/>
    </cofactor>
    <text evidence="1">Binds 2 [4Fe-4S] clusters per subunit.</text>
</comment>
<comment type="subunit">
    <text evidence="1">The complex is composed of six subunits: RsxA, RsxB, RsxC, RsxD, RsxE and RsxG.</text>
</comment>
<comment type="subcellular location">
    <subcellularLocation>
        <location evidence="1">Cell inner membrane</location>
        <topology evidence="1">Peripheral membrane protein</topology>
    </subcellularLocation>
</comment>
<comment type="similarity">
    <text evidence="1">Belongs to the 4Fe4S bacterial-type ferredoxin family. RnfC subfamily.</text>
</comment>
<feature type="chain" id="PRO_1000013615" description="Ion-translocating oxidoreductase complex subunit C">
    <location>
        <begin position="1"/>
        <end position="740"/>
    </location>
</feature>
<feature type="domain" description="4Fe-4S ferredoxin-type 1" evidence="1">
    <location>
        <begin position="369"/>
        <end position="397"/>
    </location>
</feature>
<feature type="domain" description="4Fe-4S ferredoxin-type 2" evidence="1">
    <location>
        <begin position="407"/>
        <end position="436"/>
    </location>
</feature>
<feature type="region of interest" description="Disordered" evidence="2">
    <location>
        <begin position="598"/>
        <end position="716"/>
    </location>
</feature>
<feature type="binding site" evidence="1">
    <location>
        <position position="377"/>
    </location>
    <ligand>
        <name>[4Fe-4S] cluster</name>
        <dbReference type="ChEBI" id="CHEBI:49883"/>
        <label>1</label>
    </ligand>
</feature>
<feature type="binding site" evidence="1">
    <location>
        <position position="380"/>
    </location>
    <ligand>
        <name>[4Fe-4S] cluster</name>
        <dbReference type="ChEBI" id="CHEBI:49883"/>
        <label>1</label>
    </ligand>
</feature>
<feature type="binding site" evidence="1">
    <location>
        <position position="383"/>
    </location>
    <ligand>
        <name>[4Fe-4S] cluster</name>
        <dbReference type="ChEBI" id="CHEBI:49883"/>
        <label>1</label>
    </ligand>
</feature>
<feature type="binding site" evidence="1">
    <location>
        <position position="387"/>
    </location>
    <ligand>
        <name>[4Fe-4S] cluster</name>
        <dbReference type="ChEBI" id="CHEBI:49883"/>
        <label>2</label>
    </ligand>
</feature>
<feature type="binding site" evidence="1">
    <location>
        <position position="416"/>
    </location>
    <ligand>
        <name>[4Fe-4S] cluster</name>
        <dbReference type="ChEBI" id="CHEBI:49883"/>
        <label>2</label>
    </ligand>
</feature>
<feature type="binding site" evidence="1">
    <location>
        <position position="419"/>
    </location>
    <ligand>
        <name>[4Fe-4S] cluster</name>
        <dbReference type="ChEBI" id="CHEBI:49883"/>
        <label>2</label>
    </ligand>
</feature>
<feature type="binding site" evidence="1">
    <location>
        <position position="422"/>
    </location>
    <ligand>
        <name>[4Fe-4S] cluster</name>
        <dbReference type="ChEBI" id="CHEBI:49883"/>
        <label>2</label>
    </ligand>
</feature>
<feature type="binding site" evidence="1">
    <location>
        <position position="426"/>
    </location>
    <ligand>
        <name>[4Fe-4S] cluster</name>
        <dbReference type="ChEBI" id="CHEBI:49883"/>
        <label>1</label>
    </ligand>
</feature>